<dbReference type="EMBL" id="BK001121">
    <property type="protein sequence ID" value="DAA01178.1"/>
    <property type="molecule type" value="mRNA"/>
</dbReference>
<dbReference type="EMBL" id="AB041581">
    <property type="protein sequence ID" value="BAA95065.1"/>
    <property type="molecule type" value="mRNA"/>
</dbReference>
<dbReference type="EMBL" id="AK028734">
    <property type="protein sequence ID" value="BAC26089.1"/>
    <property type="molecule type" value="mRNA"/>
</dbReference>
<dbReference type="EMBL" id="AK041427">
    <property type="protein sequence ID" value="BAC30943.1"/>
    <property type="molecule type" value="mRNA"/>
</dbReference>
<dbReference type="EMBL" id="AK076051">
    <property type="protein sequence ID" value="BAC36149.1"/>
    <property type="molecule type" value="mRNA"/>
</dbReference>
<dbReference type="EMBL" id="AK154755">
    <property type="protein sequence ID" value="BAE32806.1"/>
    <property type="molecule type" value="mRNA"/>
</dbReference>
<dbReference type="EMBL" id="BC038499">
    <property type="protein sequence ID" value="AAH38499.1"/>
    <property type="molecule type" value="mRNA"/>
</dbReference>
<dbReference type="CCDS" id="CCDS21316.1"/>
<dbReference type="RefSeq" id="NP_001243059.1">
    <property type="nucleotide sequence ID" value="NM_001256130.1"/>
</dbReference>
<dbReference type="RefSeq" id="NP_001243060.1">
    <property type="nucleotide sequence ID" value="NM_001256131.1"/>
</dbReference>
<dbReference type="RefSeq" id="NP_001243061.1">
    <property type="nucleotide sequence ID" value="NM_001256132.1"/>
</dbReference>
<dbReference type="RefSeq" id="NP_001243062.1">
    <property type="nucleotide sequence ID" value="NM_001256133.1"/>
</dbReference>
<dbReference type="RefSeq" id="NP_076136.2">
    <property type="nucleotide sequence ID" value="NM_023647.6"/>
</dbReference>
<dbReference type="RefSeq" id="XP_006541387.1">
    <property type="nucleotide sequence ID" value="XM_006541324.4"/>
</dbReference>
<dbReference type="FunCoup" id="Q9JJC8">
    <property type="interactions" value="2860"/>
</dbReference>
<dbReference type="IntAct" id="Q9JJC8">
    <property type="interactions" value="1"/>
</dbReference>
<dbReference type="MINT" id="Q9JJC8"/>
<dbReference type="STRING" id="10090.ENSMUSP00000114020"/>
<dbReference type="iPTMnet" id="Q9JJC8"/>
<dbReference type="PhosphoSitePlus" id="Q9JJC8"/>
<dbReference type="PaxDb" id="10090-ENSMUSP00000114020"/>
<dbReference type="ProteomicsDB" id="252966"/>
<dbReference type="Antibodypedia" id="22214">
    <property type="antibodies" value="39 antibodies from 16 providers"/>
</dbReference>
<dbReference type="DNASU" id="93790"/>
<dbReference type="Ensembl" id="ENSMUST00000032635.14">
    <property type="protein sequence ID" value="ENSMUSP00000032635.8"/>
    <property type="gene ID" value="ENSMUSG00000030452.17"/>
</dbReference>
<dbReference type="Ensembl" id="ENSMUST00000117812.8">
    <property type="protein sequence ID" value="ENSMUSP00000113727.2"/>
    <property type="gene ID" value="ENSMUSG00000030452.17"/>
</dbReference>
<dbReference type="Ensembl" id="ENSMUST00000119041.8">
    <property type="protein sequence ID" value="ENSMUSP00000112394.2"/>
    <property type="gene ID" value="ENSMUSG00000030452.17"/>
</dbReference>
<dbReference type="Ensembl" id="ENSMUST00000119201.8">
    <property type="protein sequence ID" value="ENSMUSP00000114020.2"/>
    <property type="gene ID" value="ENSMUSG00000030452.17"/>
</dbReference>
<dbReference type="GeneID" id="93790"/>
<dbReference type="KEGG" id="mmu:93790"/>
<dbReference type="UCSC" id="uc009hdp.2">
    <property type="organism name" value="mouse"/>
</dbReference>
<dbReference type="AGR" id="MGI:1913918"/>
<dbReference type="CTD" id="81614"/>
<dbReference type="MGI" id="MGI:1913918">
    <property type="gene designation" value="Nipa2"/>
</dbReference>
<dbReference type="VEuPathDB" id="HostDB:ENSMUSG00000030452"/>
<dbReference type="eggNOG" id="KOG2922">
    <property type="taxonomic scope" value="Eukaryota"/>
</dbReference>
<dbReference type="GeneTree" id="ENSGT00940000155651"/>
<dbReference type="HOGENOM" id="CLU_012349_1_1_1"/>
<dbReference type="InParanoid" id="Q9JJC8"/>
<dbReference type="OMA" id="PMVYISI"/>
<dbReference type="OrthoDB" id="6428174at2759"/>
<dbReference type="PhylomeDB" id="Q9JJC8"/>
<dbReference type="TreeFam" id="TF313214"/>
<dbReference type="Reactome" id="R-MMU-5223345">
    <property type="pathway name" value="Miscellaneous transport and binding events"/>
</dbReference>
<dbReference type="BioGRID-ORCS" id="93790">
    <property type="hits" value="4 hits in 79 CRISPR screens"/>
</dbReference>
<dbReference type="ChiTaRS" id="Nipa2">
    <property type="organism name" value="mouse"/>
</dbReference>
<dbReference type="PRO" id="PR:Q9JJC8"/>
<dbReference type="Proteomes" id="UP000000589">
    <property type="component" value="Chromosome 7"/>
</dbReference>
<dbReference type="RNAct" id="Q9JJC8">
    <property type="molecule type" value="protein"/>
</dbReference>
<dbReference type="Bgee" id="ENSMUSG00000030452">
    <property type="expression patterns" value="Expressed in epithelium of small intestine and 244 other cell types or tissues"/>
</dbReference>
<dbReference type="ExpressionAtlas" id="Q9JJC8">
    <property type="expression patterns" value="baseline and differential"/>
</dbReference>
<dbReference type="GO" id="GO:0005769">
    <property type="term" value="C:early endosome"/>
    <property type="evidence" value="ECO:0000314"/>
    <property type="project" value="UniProtKB"/>
</dbReference>
<dbReference type="GO" id="GO:0005886">
    <property type="term" value="C:plasma membrane"/>
    <property type="evidence" value="ECO:0000314"/>
    <property type="project" value="UniProtKB"/>
</dbReference>
<dbReference type="GO" id="GO:0015095">
    <property type="term" value="F:magnesium ion transmembrane transporter activity"/>
    <property type="evidence" value="ECO:0007669"/>
    <property type="project" value="InterPro"/>
</dbReference>
<dbReference type="GO" id="GO:0015693">
    <property type="term" value="P:magnesium ion transport"/>
    <property type="evidence" value="ECO:0000314"/>
    <property type="project" value="UniProtKB"/>
</dbReference>
<dbReference type="Gene3D" id="1.10.3730.20">
    <property type="match status" value="1"/>
</dbReference>
<dbReference type="InterPro" id="IPR008521">
    <property type="entry name" value="Mg_trans_NIPA"/>
</dbReference>
<dbReference type="PANTHER" id="PTHR12570">
    <property type="match status" value="1"/>
</dbReference>
<dbReference type="PANTHER" id="PTHR12570:SF1">
    <property type="entry name" value="MAGNESIUM TRANSPORTER NIPA2"/>
    <property type="match status" value="1"/>
</dbReference>
<dbReference type="Pfam" id="PF05653">
    <property type="entry name" value="Mg_trans_NIPA"/>
    <property type="match status" value="1"/>
</dbReference>
<dbReference type="SUPFAM" id="SSF103481">
    <property type="entry name" value="Multidrug resistance efflux transporter EmrE"/>
    <property type="match status" value="1"/>
</dbReference>
<evidence type="ECO:0000255" key="1"/>
<evidence type="ECO:0000269" key="2">
    <source>
    </source>
</evidence>
<evidence type="ECO:0000269" key="3">
    <source>
    </source>
</evidence>
<evidence type="ECO:0000305" key="4"/>
<proteinExistence type="evidence at protein level"/>
<keyword id="KW-1003">Cell membrane</keyword>
<keyword id="KW-0967">Endosome</keyword>
<keyword id="KW-0406">Ion transport</keyword>
<keyword id="KW-0460">Magnesium</keyword>
<keyword id="KW-0472">Membrane</keyword>
<keyword id="KW-1185">Reference proteome</keyword>
<keyword id="KW-0812">Transmembrane</keyword>
<keyword id="KW-1133">Transmembrane helix</keyword>
<keyword id="KW-0813">Transport</keyword>
<accession>Q9JJC8</accession>
<accession>Q3U3I0</accession>
<organism>
    <name type="scientific">Mus musculus</name>
    <name type="common">Mouse</name>
    <dbReference type="NCBI Taxonomy" id="10090"/>
    <lineage>
        <taxon>Eukaryota</taxon>
        <taxon>Metazoa</taxon>
        <taxon>Chordata</taxon>
        <taxon>Craniata</taxon>
        <taxon>Vertebrata</taxon>
        <taxon>Euteleostomi</taxon>
        <taxon>Mammalia</taxon>
        <taxon>Eutheria</taxon>
        <taxon>Euarchontoglires</taxon>
        <taxon>Glires</taxon>
        <taxon>Rodentia</taxon>
        <taxon>Myomorpha</taxon>
        <taxon>Muroidea</taxon>
        <taxon>Muridae</taxon>
        <taxon>Murinae</taxon>
        <taxon>Mus</taxon>
        <taxon>Mus</taxon>
    </lineage>
</organism>
<sequence length="359" mass="39091">MSLGRGKYDFYIGLGLAMTSSIFIGGSFILKKKGLLRLARKGSMRAGQGGHAYLKEWLWWAGLLSMGAGEVANFAAYAFAPATLVTPLGALSVLVSAILSSYFLNERLNLHGKIGCLLSILGSTVMVIHAPKEEEIETLNEMSHKLGDPGFVVFATFVVIVALIFIFVVGPRHGQTNILVYITICSVIGAFSVSCVKGLGIAIKELLAGKPVLQHPLAWILLFSLVVCVSTQINYLNRALDIFNTSIVTPIYYVFFTTSVLTCSAILFKEWQDMPVDDVIGTLSGFFTIIVGIFLLHAFKDVSFSLASLPVSFRKDEKAMNGNLSSMYEVLNNNEDDLPCGIEHTGENISRRNGNLPSF</sequence>
<comment type="function">
    <text evidence="3">Acts as a selective Mg(2+) transporter.</text>
</comment>
<comment type="catalytic activity">
    <reaction evidence="3">
        <text>Mg(2+)(in) = Mg(2+)(out)</text>
        <dbReference type="Rhea" id="RHEA:29827"/>
        <dbReference type="ChEBI" id="CHEBI:18420"/>
    </reaction>
</comment>
<comment type="biophysicochemical properties">
    <kinetics>
        <KM evidence="3">0.31 mM for magnesium ions</KM>
    </kinetics>
</comment>
<comment type="subcellular location">
    <subcellularLocation>
        <location evidence="3">Cell membrane</location>
        <topology evidence="1">Multi-pass membrane protein</topology>
    </subcellularLocation>
    <subcellularLocation>
        <location evidence="3">Early endosome</location>
    </subcellularLocation>
    <text>Recruited to the cell membrane in response to low extracellular magnesium.</text>
</comment>
<comment type="tissue specificity">
    <text evidence="2 3">Widely expressed. Expressed at high levels in the kidney.</text>
</comment>
<comment type="induction">
    <text evidence="3">Up-regulated by low magnesium ion levels.</text>
</comment>
<comment type="similarity">
    <text evidence="4">Belongs to the NIPA family.</text>
</comment>
<protein>
    <recommendedName>
        <fullName>Magnesium transporter NIPA2</fullName>
    </recommendedName>
    <alternativeName>
        <fullName>Non-imprinted in Prader-Willi/Angelman syndrome region protein 2 homolog</fullName>
    </alternativeName>
</protein>
<gene>
    <name type="primary">Nipa2</name>
    <name type="ORF">MNCb-2146</name>
</gene>
<feature type="chain" id="PRO_0000191744" description="Magnesium transporter NIPA2">
    <location>
        <begin position="1"/>
        <end position="359"/>
    </location>
</feature>
<feature type="topological domain" description="Extracellular" evidence="1">
    <location>
        <begin position="1"/>
        <end position="9"/>
    </location>
</feature>
<feature type="transmembrane region" description="Helical" evidence="1">
    <location>
        <begin position="10"/>
        <end position="30"/>
    </location>
</feature>
<feature type="topological domain" description="Cytoplasmic" evidence="1">
    <location>
        <begin position="31"/>
        <end position="56"/>
    </location>
</feature>
<feature type="transmembrane region" description="Helical" evidence="1">
    <location>
        <begin position="57"/>
        <end position="77"/>
    </location>
</feature>
<feature type="topological domain" description="Extracellular" evidence="1">
    <location>
        <position position="78"/>
    </location>
</feature>
<feature type="transmembrane region" description="Helical" evidence="1">
    <location>
        <begin position="79"/>
        <end position="99"/>
    </location>
</feature>
<feature type="topological domain" description="Cytoplasmic" evidence="1">
    <location>
        <begin position="100"/>
        <end position="107"/>
    </location>
</feature>
<feature type="transmembrane region" description="Helical" evidence="1">
    <location>
        <begin position="108"/>
        <end position="128"/>
    </location>
</feature>
<feature type="topological domain" description="Extracellular" evidence="1">
    <location>
        <begin position="129"/>
        <end position="149"/>
    </location>
</feature>
<feature type="transmembrane region" description="Helical" evidence="1">
    <location>
        <begin position="150"/>
        <end position="170"/>
    </location>
</feature>
<feature type="topological domain" description="Cytoplasmic" evidence="1">
    <location>
        <begin position="171"/>
        <end position="175"/>
    </location>
</feature>
<feature type="transmembrane region" description="Helical" evidence="1">
    <location>
        <begin position="176"/>
        <end position="196"/>
    </location>
</feature>
<feature type="topological domain" description="Extracellular" evidence="1">
    <location>
        <begin position="197"/>
        <end position="215"/>
    </location>
</feature>
<feature type="transmembrane region" description="Helical" evidence="1">
    <location>
        <begin position="216"/>
        <end position="236"/>
    </location>
</feature>
<feature type="topological domain" description="Cytoplasmic" evidence="1">
    <location>
        <begin position="237"/>
        <end position="246"/>
    </location>
</feature>
<feature type="transmembrane region" description="Helical" evidence="1">
    <location>
        <begin position="247"/>
        <end position="267"/>
    </location>
</feature>
<feature type="topological domain" description="Extracellular" evidence="1">
    <location>
        <begin position="268"/>
        <end position="278"/>
    </location>
</feature>
<feature type="transmembrane region" description="Helical" evidence="1">
    <location>
        <begin position="279"/>
        <end position="299"/>
    </location>
</feature>
<feature type="topological domain" description="Cytoplasmic" evidence="1">
    <location>
        <begin position="300"/>
        <end position="359"/>
    </location>
</feature>
<name>NIPA2_MOUSE</name>
<reference key="1">
    <citation type="journal article" date="2003" name="Am. J. Hum. Genet.">
        <title>Identification of four highly conserved genes between breakpoint hotspots BP1 and BP2 of the Prader-Willi/Angelman syndromes deletion region that have undergone evolutionary transposition mediated by flanking duplicons.</title>
        <authorList>
            <person name="Chai J.-H."/>
            <person name="Locke D.P."/>
            <person name="Greally J.M."/>
            <person name="Knoll J.H.M."/>
            <person name="Ohta T."/>
            <person name="Dunai J."/>
            <person name="Yavor A."/>
            <person name="Eichler E.E."/>
            <person name="Nicholls R.D."/>
        </authorList>
    </citation>
    <scope>NUCLEOTIDE SEQUENCE [MRNA]</scope>
    <scope>TISSUE SPECIFICITY</scope>
</reference>
<reference key="2">
    <citation type="submission" date="2000-04" db="EMBL/GenBank/DDBJ databases">
        <title>Isolation of full-length cDNA clones from mouse brain cDNA library made by oligo-capping method.</title>
        <authorList>
            <person name="Osada N."/>
            <person name="Kusuda J."/>
            <person name="Tanuma R."/>
            <person name="Ito A."/>
            <person name="Hirata M."/>
            <person name="Sugano S."/>
            <person name="Hashimoto K."/>
        </authorList>
    </citation>
    <scope>NUCLEOTIDE SEQUENCE [LARGE SCALE MRNA]</scope>
    <source>
        <strain>C57BL/6J</strain>
        <tissue>Brain</tissue>
    </source>
</reference>
<reference key="3">
    <citation type="journal article" date="2005" name="Science">
        <title>The transcriptional landscape of the mammalian genome.</title>
        <authorList>
            <person name="Carninci P."/>
            <person name="Kasukawa T."/>
            <person name="Katayama S."/>
            <person name="Gough J."/>
            <person name="Frith M.C."/>
            <person name="Maeda N."/>
            <person name="Oyama R."/>
            <person name="Ravasi T."/>
            <person name="Lenhard B."/>
            <person name="Wells C."/>
            <person name="Kodzius R."/>
            <person name="Shimokawa K."/>
            <person name="Bajic V.B."/>
            <person name="Brenner S.E."/>
            <person name="Batalov S."/>
            <person name="Forrest A.R."/>
            <person name="Zavolan M."/>
            <person name="Davis M.J."/>
            <person name="Wilming L.G."/>
            <person name="Aidinis V."/>
            <person name="Allen J.E."/>
            <person name="Ambesi-Impiombato A."/>
            <person name="Apweiler R."/>
            <person name="Aturaliya R.N."/>
            <person name="Bailey T.L."/>
            <person name="Bansal M."/>
            <person name="Baxter L."/>
            <person name="Beisel K.W."/>
            <person name="Bersano T."/>
            <person name="Bono H."/>
            <person name="Chalk A.M."/>
            <person name="Chiu K.P."/>
            <person name="Choudhary V."/>
            <person name="Christoffels A."/>
            <person name="Clutterbuck D.R."/>
            <person name="Crowe M.L."/>
            <person name="Dalla E."/>
            <person name="Dalrymple B.P."/>
            <person name="de Bono B."/>
            <person name="Della Gatta G."/>
            <person name="di Bernardo D."/>
            <person name="Down T."/>
            <person name="Engstrom P."/>
            <person name="Fagiolini M."/>
            <person name="Faulkner G."/>
            <person name="Fletcher C.F."/>
            <person name="Fukushima T."/>
            <person name="Furuno M."/>
            <person name="Futaki S."/>
            <person name="Gariboldi M."/>
            <person name="Georgii-Hemming P."/>
            <person name="Gingeras T.R."/>
            <person name="Gojobori T."/>
            <person name="Green R.E."/>
            <person name="Gustincich S."/>
            <person name="Harbers M."/>
            <person name="Hayashi Y."/>
            <person name="Hensch T.K."/>
            <person name="Hirokawa N."/>
            <person name="Hill D."/>
            <person name="Huminiecki L."/>
            <person name="Iacono M."/>
            <person name="Ikeo K."/>
            <person name="Iwama A."/>
            <person name="Ishikawa T."/>
            <person name="Jakt M."/>
            <person name="Kanapin A."/>
            <person name="Katoh M."/>
            <person name="Kawasawa Y."/>
            <person name="Kelso J."/>
            <person name="Kitamura H."/>
            <person name="Kitano H."/>
            <person name="Kollias G."/>
            <person name="Krishnan S.P."/>
            <person name="Kruger A."/>
            <person name="Kummerfeld S.K."/>
            <person name="Kurochkin I.V."/>
            <person name="Lareau L.F."/>
            <person name="Lazarevic D."/>
            <person name="Lipovich L."/>
            <person name="Liu J."/>
            <person name="Liuni S."/>
            <person name="McWilliam S."/>
            <person name="Madan Babu M."/>
            <person name="Madera M."/>
            <person name="Marchionni L."/>
            <person name="Matsuda H."/>
            <person name="Matsuzawa S."/>
            <person name="Miki H."/>
            <person name="Mignone F."/>
            <person name="Miyake S."/>
            <person name="Morris K."/>
            <person name="Mottagui-Tabar S."/>
            <person name="Mulder N."/>
            <person name="Nakano N."/>
            <person name="Nakauchi H."/>
            <person name="Ng P."/>
            <person name="Nilsson R."/>
            <person name="Nishiguchi S."/>
            <person name="Nishikawa S."/>
            <person name="Nori F."/>
            <person name="Ohara O."/>
            <person name="Okazaki Y."/>
            <person name="Orlando V."/>
            <person name="Pang K.C."/>
            <person name="Pavan W.J."/>
            <person name="Pavesi G."/>
            <person name="Pesole G."/>
            <person name="Petrovsky N."/>
            <person name="Piazza S."/>
            <person name="Reed J."/>
            <person name="Reid J.F."/>
            <person name="Ring B.Z."/>
            <person name="Ringwald M."/>
            <person name="Rost B."/>
            <person name="Ruan Y."/>
            <person name="Salzberg S.L."/>
            <person name="Sandelin A."/>
            <person name="Schneider C."/>
            <person name="Schoenbach C."/>
            <person name="Sekiguchi K."/>
            <person name="Semple C.A."/>
            <person name="Seno S."/>
            <person name="Sessa L."/>
            <person name="Sheng Y."/>
            <person name="Shibata Y."/>
            <person name="Shimada H."/>
            <person name="Shimada K."/>
            <person name="Silva D."/>
            <person name="Sinclair B."/>
            <person name="Sperling S."/>
            <person name="Stupka E."/>
            <person name="Sugiura K."/>
            <person name="Sultana R."/>
            <person name="Takenaka Y."/>
            <person name="Taki K."/>
            <person name="Tammoja K."/>
            <person name="Tan S.L."/>
            <person name="Tang S."/>
            <person name="Taylor M.S."/>
            <person name="Tegner J."/>
            <person name="Teichmann S.A."/>
            <person name="Ueda H.R."/>
            <person name="van Nimwegen E."/>
            <person name="Verardo R."/>
            <person name="Wei C.L."/>
            <person name="Yagi K."/>
            <person name="Yamanishi H."/>
            <person name="Zabarovsky E."/>
            <person name="Zhu S."/>
            <person name="Zimmer A."/>
            <person name="Hide W."/>
            <person name="Bult C."/>
            <person name="Grimmond S.M."/>
            <person name="Teasdale R.D."/>
            <person name="Liu E.T."/>
            <person name="Brusic V."/>
            <person name="Quackenbush J."/>
            <person name="Wahlestedt C."/>
            <person name="Mattick J.S."/>
            <person name="Hume D.A."/>
            <person name="Kai C."/>
            <person name="Sasaki D."/>
            <person name="Tomaru Y."/>
            <person name="Fukuda S."/>
            <person name="Kanamori-Katayama M."/>
            <person name="Suzuki M."/>
            <person name="Aoki J."/>
            <person name="Arakawa T."/>
            <person name="Iida J."/>
            <person name="Imamura K."/>
            <person name="Itoh M."/>
            <person name="Kato T."/>
            <person name="Kawaji H."/>
            <person name="Kawagashira N."/>
            <person name="Kawashima T."/>
            <person name="Kojima M."/>
            <person name="Kondo S."/>
            <person name="Konno H."/>
            <person name="Nakano K."/>
            <person name="Ninomiya N."/>
            <person name="Nishio T."/>
            <person name="Okada M."/>
            <person name="Plessy C."/>
            <person name="Shibata K."/>
            <person name="Shiraki T."/>
            <person name="Suzuki S."/>
            <person name="Tagami M."/>
            <person name="Waki K."/>
            <person name="Watahiki A."/>
            <person name="Okamura-Oho Y."/>
            <person name="Suzuki H."/>
            <person name="Kawai J."/>
            <person name="Hayashizaki Y."/>
        </authorList>
    </citation>
    <scope>NUCLEOTIDE SEQUENCE [LARGE SCALE MRNA]</scope>
    <source>
        <strain>C57BL/6J</strain>
        <strain>NOD</strain>
        <tissue>Skin</tissue>
        <tissue>Thymus</tissue>
    </source>
</reference>
<reference key="4">
    <citation type="journal article" date="2004" name="Genome Res.">
        <title>The status, quality, and expansion of the NIH full-length cDNA project: the Mammalian Gene Collection (MGC).</title>
        <authorList>
            <consortium name="The MGC Project Team"/>
        </authorList>
    </citation>
    <scope>NUCLEOTIDE SEQUENCE [LARGE SCALE MRNA]</scope>
    <source>
        <tissue>Eye</tissue>
    </source>
</reference>
<reference key="5">
    <citation type="journal article" date="2008" name="Am. J. Physiol.">
        <title>Functional characterization of NIPA2, a selective Mg2+ transporter.</title>
        <authorList>
            <person name="Goytain A."/>
            <person name="Hines R.M."/>
            <person name="Quamme G.A."/>
        </authorList>
    </citation>
    <scope>FUNCTION</scope>
    <scope>SUBCELLULAR LOCATION</scope>
    <scope>INDUCTION</scope>
    <scope>TISSUE SPECIFICITY</scope>
    <scope>BIOPHYSICOCHEMICAL PROPERTIES</scope>
    <scope>CATALYTIC ACTIVITY</scope>
</reference>